<organism>
    <name type="scientific">Fusobacterium nucleatum subsp. nucleatum (strain ATCC 25586 / DSM 15643 / BCRC 10681 / CIP 101130 / JCM 8532 / KCTC 2640 / LMG 13131 / VPI 4355)</name>
    <dbReference type="NCBI Taxonomy" id="190304"/>
    <lineage>
        <taxon>Bacteria</taxon>
        <taxon>Fusobacteriati</taxon>
        <taxon>Fusobacteriota</taxon>
        <taxon>Fusobacteriia</taxon>
        <taxon>Fusobacteriales</taxon>
        <taxon>Fusobacteriaceae</taxon>
        <taxon>Fusobacterium</taxon>
    </lineage>
</organism>
<name>MURB_FUSNN</name>
<reference key="1">
    <citation type="journal article" date="2002" name="J. Bacteriol.">
        <title>Genome sequence and analysis of the oral bacterium Fusobacterium nucleatum strain ATCC 25586.</title>
        <authorList>
            <person name="Kapatral V."/>
            <person name="Anderson I."/>
            <person name="Ivanova N."/>
            <person name="Reznik G."/>
            <person name="Los T."/>
            <person name="Lykidis A."/>
            <person name="Bhattacharyya A."/>
            <person name="Bartman A."/>
            <person name="Gardner W."/>
            <person name="Grechkin G."/>
            <person name="Zhu L."/>
            <person name="Vasieva O."/>
            <person name="Chu L."/>
            <person name="Kogan Y."/>
            <person name="Chaga O."/>
            <person name="Goltsman E."/>
            <person name="Bernal A."/>
            <person name="Larsen N."/>
            <person name="D'Souza M."/>
            <person name="Walunas T."/>
            <person name="Pusch G."/>
            <person name="Haselkorn R."/>
            <person name="Fonstein M."/>
            <person name="Kyrpides N.C."/>
            <person name="Overbeek R."/>
        </authorList>
    </citation>
    <scope>NUCLEOTIDE SEQUENCE [LARGE SCALE GENOMIC DNA]</scope>
    <source>
        <strain>ATCC 25586 / DSM 15643 / BCRC 10681 / CIP 101130 / JCM 8532 / KCTC 2640 / LMG 13131 / VPI 4355</strain>
    </source>
</reference>
<keyword id="KW-0131">Cell cycle</keyword>
<keyword id="KW-0132">Cell division</keyword>
<keyword id="KW-0133">Cell shape</keyword>
<keyword id="KW-0961">Cell wall biogenesis/degradation</keyword>
<keyword id="KW-0963">Cytoplasm</keyword>
<keyword id="KW-0274">FAD</keyword>
<keyword id="KW-0285">Flavoprotein</keyword>
<keyword id="KW-0521">NADP</keyword>
<keyword id="KW-0560">Oxidoreductase</keyword>
<keyword id="KW-0573">Peptidoglycan synthesis</keyword>
<keyword id="KW-1185">Reference proteome</keyword>
<protein>
    <recommendedName>
        <fullName evidence="1">UDP-N-acetylenolpyruvoylglucosamine reductase</fullName>
        <ecNumber evidence="1">1.3.1.98</ecNumber>
    </recommendedName>
    <alternativeName>
        <fullName evidence="1">UDP-N-acetylmuramate dehydrogenase</fullName>
    </alternativeName>
</protein>
<sequence length="281" mass="31781">MKIFTNQEMKNYSNMRVGGKAKKLIILEPKEEIIDVYNDKENTDIFILGNGTNILFTDEYMDKIFVCTKKLNKIEDLGKNLVKVETGANLKDLTDFMKDKNYTGIESLFGIPGSIGGLVYMNGGAFGTEIFDKIVSIEVFDENHQIREIKKEDLKVAYRKTEIQDKNWLVLSATFKFDNGFDAARVKEIKELRESKHPLDKPSLGSTFKNPEGDFAARLISECGLKGTIIGNAQIAEKHPNFVLNLGNATFKDIIDILTLVKKSVLEKFGIKLEEEIIIVR</sequence>
<dbReference type="EC" id="1.3.1.98" evidence="1"/>
<dbReference type="EMBL" id="AE009951">
    <property type="protein sequence ID" value="AAL95648.1"/>
    <property type="molecule type" value="Genomic_DNA"/>
</dbReference>
<dbReference type="RefSeq" id="NP_604349.1">
    <property type="nucleotide sequence ID" value="NC_003454.1"/>
</dbReference>
<dbReference type="SMR" id="Q8RDQ3"/>
<dbReference type="FunCoup" id="Q8RDQ3">
    <property type="interactions" value="281"/>
</dbReference>
<dbReference type="STRING" id="190304.FN1455"/>
<dbReference type="PaxDb" id="190304-FN1455"/>
<dbReference type="EnsemblBacteria" id="AAL95648">
    <property type="protein sequence ID" value="AAL95648"/>
    <property type="gene ID" value="FN1455"/>
</dbReference>
<dbReference type="KEGG" id="fnu:FN1455"/>
<dbReference type="PATRIC" id="fig|190304.8.peg.2015"/>
<dbReference type="eggNOG" id="COG0812">
    <property type="taxonomic scope" value="Bacteria"/>
</dbReference>
<dbReference type="HOGENOM" id="CLU_035304_1_1_0"/>
<dbReference type="InParanoid" id="Q8RDQ3"/>
<dbReference type="BioCyc" id="FNUC190304:G1FZS-2024-MONOMER"/>
<dbReference type="UniPathway" id="UPA00219"/>
<dbReference type="Proteomes" id="UP000002521">
    <property type="component" value="Chromosome"/>
</dbReference>
<dbReference type="GO" id="GO:0005829">
    <property type="term" value="C:cytosol"/>
    <property type="evidence" value="ECO:0000318"/>
    <property type="project" value="GO_Central"/>
</dbReference>
<dbReference type="GO" id="GO:0071949">
    <property type="term" value="F:FAD binding"/>
    <property type="evidence" value="ECO:0007669"/>
    <property type="project" value="InterPro"/>
</dbReference>
<dbReference type="GO" id="GO:0050660">
    <property type="term" value="F:flavin adenine dinucleotide binding"/>
    <property type="evidence" value="ECO:0000318"/>
    <property type="project" value="GO_Central"/>
</dbReference>
<dbReference type="GO" id="GO:0008762">
    <property type="term" value="F:UDP-N-acetylmuramate dehydrogenase activity"/>
    <property type="evidence" value="ECO:0000318"/>
    <property type="project" value="GO_Central"/>
</dbReference>
<dbReference type="GO" id="GO:0051301">
    <property type="term" value="P:cell division"/>
    <property type="evidence" value="ECO:0007669"/>
    <property type="project" value="UniProtKB-KW"/>
</dbReference>
<dbReference type="GO" id="GO:0071555">
    <property type="term" value="P:cell wall organization"/>
    <property type="evidence" value="ECO:0000318"/>
    <property type="project" value="GO_Central"/>
</dbReference>
<dbReference type="GO" id="GO:0009252">
    <property type="term" value="P:peptidoglycan biosynthetic process"/>
    <property type="evidence" value="ECO:0007669"/>
    <property type="project" value="UniProtKB-UniRule"/>
</dbReference>
<dbReference type="GO" id="GO:0008360">
    <property type="term" value="P:regulation of cell shape"/>
    <property type="evidence" value="ECO:0007669"/>
    <property type="project" value="UniProtKB-KW"/>
</dbReference>
<dbReference type="Gene3D" id="3.30.465.10">
    <property type="match status" value="1"/>
</dbReference>
<dbReference type="Gene3D" id="3.90.78.10">
    <property type="entry name" value="UDP-N-acetylenolpyruvoylglucosamine reductase, C-terminal domain"/>
    <property type="match status" value="1"/>
</dbReference>
<dbReference type="Gene3D" id="3.30.43.10">
    <property type="entry name" value="Uridine Diphospho-n-acetylenolpyruvylglucosamine Reductase, domain 2"/>
    <property type="match status" value="1"/>
</dbReference>
<dbReference type="HAMAP" id="MF_00037">
    <property type="entry name" value="MurB"/>
    <property type="match status" value="1"/>
</dbReference>
<dbReference type="InterPro" id="IPR016166">
    <property type="entry name" value="FAD-bd_PCMH"/>
</dbReference>
<dbReference type="InterPro" id="IPR036318">
    <property type="entry name" value="FAD-bd_PCMH-like_sf"/>
</dbReference>
<dbReference type="InterPro" id="IPR016167">
    <property type="entry name" value="FAD-bd_PCMH_sub1"/>
</dbReference>
<dbReference type="InterPro" id="IPR016169">
    <property type="entry name" value="FAD-bd_PCMH_sub2"/>
</dbReference>
<dbReference type="InterPro" id="IPR003170">
    <property type="entry name" value="MurB"/>
</dbReference>
<dbReference type="InterPro" id="IPR011601">
    <property type="entry name" value="MurB_C"/>
</dbReference>
<dbReference type="InterPro" id="IPR036635">
    <property type="entry name" value="MurB_C_sf"/>
</dbReference>
<dbReference type="InterPro" id="IPR006094">
    <property type="entry name" value="Oxid_FAD_bind_N"/>
</dbReference>
<dbReference type="NCBIfam" id="TIGR00179">
    <property type="entry name" value="murB"/>
    <property type="match status" value="1"/>
</dbReference>
<dbReference type="NCBIfam" id="NF010480">
    <property type="entry name" value="PRK13905.1"/>
    <property type="match status" value="1"/>
</dbReference>
<dbReference type="PANTHER" id="PTHR21071">
    <property type="entry name" value="UDP-N-ACETYLENOLPYRUVOYLGLUCOSAMINE REDUCTASE"/>
    <property type="match status" value="1"/>
</dbReference>
<dbReference type="PANTHER" id="PTHR21071:SF4">
    <property type="entry name" value="UDP-N-ACETYLENOLPYRUVOYLGLUCOSAMINE REDUCTASE"/>
    <property type="match status" value="1"/>
</dbReference>
<dbReference type="Pfam" id="PF01565">
    <property type="entry name" value="FAD_binding_4"/>
    <property type="match status" value="1"/>
</dbReference>
<dbReference type="Pfam" id="PF02873">
    <property type="entry name" value="MurB_C"/>
    <property type="match status" value="1"/>
</dbReference>
<dbReference type="SUPFAM" id="SSF56176">
    <property type="entry name" value="FAD-binding/transporter-associated domain-like"/>
    <property type="match status" value="1"/>
</dbReference>
<dbReference type="SUPFAM" id="SSF56194">
    <property type="entry name" value="Uridine diphospho-N-Acetylenolpyruvylglucosamine reductase, MurB, C-terminal domain"/>
    <property type="match status" value="1"/>
</dbReference>
<dbReference type="PROSITE" id="PS51387">
    <property type="entry name" value="FAD_PCMH"/>
    <property type="match status" value="1"/>
</dbReference>
<gene>
    <name evidence="1" type="primary">murB</name>
    <name type="ordered locus">FN1455</name>
</gene>
<accession>Q8RDQ3</accession>
<evidence type="ECO:0000255" key="1">
    <source>
        <dbReference type="HAMAP-Rule" id="MF_00037"/>
    </source>
</evidence>
<comment type="function">
    <text evidence="1">Cell wall formation.</text>
</comment>
<comment type="catalytic activity">
    <reaction evidence="1">
        <text>UDP-N-acetyl-alpha-D-muramate + NADP(+) = UDP-N-acetyl-3-O-(1-carboxyvinyl)-alpha-D-glucosamine + NADPH + H(+)</text>
        <dbReference type="Rhea" id="RHEA:12248"/>
        <dbReference type="ChEBI" id="CHEBI:15378"/>
        <dbReference type="ChEBI" id="CHEBI:57783"/>
        <dbReference type="ChEBI" id="CHEBI:58349"/>
        <dbReference type="ChEBI" id="CHEBI:68483"/>
        <dbReference type="ChEBI" id="CHEBI:70757"/>
        <dbReference type="EC" id="1.3.1.98"/>
    </reaction>
</comment>
<comment type="cofactor">
    <cofactor evidence="1">
        <name>FAD</name>
        <dbReference type="ChEBI" id="CHEBI:57692"/>
    </cofactor>
</comment>
<comment type="pathway">
    <text evidence="1">Cell wall biogenesis; peptidoglycan biosynthesis.</text>
</comment>
<comment type="subcellular location">
    <subcellularLocation>
        <location evidence="1">Cytoplasm</location>
    </subcellularLocation>
</comment>
<comment type="similarity">
    <text evidence="1">Belongs to the MurB family.</text>
</comment>
<proteinExistence type="inferred from homology"/>
<feature type="chain" id="PRO_0000179211" description="UDP-N-acetylenolpyruvoylglucosamine reductase">
    <location>
        <begin position="1"/>
        <end position="281"/>
    </location>
</feature>
<feature type="domain" description="FAD-binding PCMH-type" evidence="1">
    <location>
        <begin position="17"/>
        <end position="180"/>
    </location>
</feature>
<feature type="active site" evidence="1">
    <location>
        <position position="159"/>
    </location>
</feature>
<feature type="active site" description="Proton donor" evidence="1">
    <location>
        <position position="206"/>
    </location>
</feature>
<feature type="active site" evidence="1">
    <location>
        <position position="276"/>
    </location>
</feature>